<organism>
    <name type="scientific">Bacillus phage SP01</name>
    <name type="common">Bacteriophage SP01</name>
    <dbReference type="NCBI Taxonomy" id="2884427"/>
    <lineage>
        <taxon>Viruses</taxon>
        <taxon>Duplodnaviria</taxon>
        <taxon>Heunggongvirae</taxon>
        <taxon>Uroviricota</taxon>
        <taxon>Caudoviricetes</taxon>
        <taxon>Herelleviridae</taxon>
        <taxon>Spounavirinae</taxon>
        <taxon>Okubovirus</taxon>
        <taxon>Okubovirus SPO1</taxon>
    </lineage>
</organism>
<name>GP39_BPSP1</name>
<dbReference type="EMBL" id="AF031901">
    <property type="protein sequence ID" value="AAC29008.1"/>
    <property type="molecule type" value="Genomic_DNA"/>
</dbReference>
<dbReference type="RefSeq" id="YP_002300283.1">
    <property type="nucleotide sequence ID" value="NC_011421.1"/>
</dbReference>
<dbReference type="GeneID" id="7008996"/>
<dbReference type="KEGG" id="vg:7008996"/>
<proteinExistence type="predicted"/>
<feature type="chain" id="PRO_0000106145" description="Putative gene 39 protein">
    <location>
        <begin position="1"/>
        <end position="255"/>
    </location>
</feature>
<protein>
    <recommendedName>
        <fullName>Putative gene 39 protein</fullName>
    </recommendedName>
</protein>
<organismHost>
    <name type="scientific">Bacillus subtilis</name>
    <dbReference type="NCBI Taxonomy" id="1423"/>
</organismHost>
<gene>
    <name type="primary">39</name>
</gene>
<sequence length="255" mass="28899">MELNLDIYVDYKDKRYKAEGYYGPSVGDLVLIFMDMELEGATVQEVARIEGSEIHLRTPNGNEPSYRYMGQYLILKPYGSSDPRGDILVHEDVQYVRVDAQAMPGDLIEALEPNKLPFSGKRFKYRPAVLEVEYVLTKDEQVLQLENGKSYSGAYRVLIPRMGVLPPKTHIYTTHKHVFMEDVFVLGNSYELSSPNDVEMTPIHAVFTGFSKNRDEAIFVNPYYNDDGVTGTMITVSDLLTGKWDITPLVPKKGV</sequence>
<reference key="1">
    <citation type="journal article" date="1998" name="Virology">
        <title>Genes and regulatory sites of the 'host-takeover module' in the terminal redundancy of Bacillus subtilis bacteriophage SPO1.</title>
        <authorList>
            <person name="Stewart C.R."/>
            <person name="Gaslightwala I."/>
            <person name="Hinata K."/>
            <person name="Krolikowski K.A."/>
            <person name="Needleman D.S."/>
            <person name="Peng A.S.-Y."/>
            <person name="Peterman M.A."/>
            <person name="Tobias A."/>
            <person name="Wei P."/>
        </authorList>
    </citation>
    <scope>NUCLEOTIDE SEQUENCE [GENOMIC DNA]</scope>
</reference>
<accession>O48395</accession>